<proteinExistence type="inferred from homology"/>
<gene>
    <name evidence="1" type="primary">pyrC</name>
    <name type="ordered locus">CLL_A2579</name>
</gene>
<evidence type="ECO:0000255" key="1">
    <source>
        <dbReference type="HAMAP-Rule" id="MF_00220"/>
    </source>
</evidence>
<reference key="1">
    <citation type="submission" date="2008-04" db="EMBL/GenBank/DDBJ databases">
        <title>Complete sequence of Clostridium botulinum strain Eklund.</title>
        <authorList>
            <person name="Brinkac L.M."/>
            <person name="Brown J.L."/>
            <person name="Bruce D."/>
            <person name="Detter C."/>
            <person name="Munk C."/>
            <person name="Smith L.A."/>
            <person name="Smith T.J."/>
            <person name="Sutton G."/>
            <person name="Brettin T.S."/>
        </authorList>
    </citation>
    <scope>NUCLEOTIDE SEQUENCE [LARGE SCALE GENOMIC DNA]</scope>
    <source>
        <strain>Eklund 17B / Type B</strain>
    </source>
</reference>
<sequence length="398" mass="44230">MELLIKNARIIDAIQDFKGDIYIKDGVINEIAQEIKKDNVEVLNCEEKILMPAFIDTHAHFRDPGLTCKEDLESGSKAALRGGYTGVCLMANTKPICSSKEVVQYVRDKSKELDLIDIHQCISVTQNFDGKTLDHLNEFKDDNEVKAISDDGVGVSNSNIMLEAMKIAKENNWVLMSHAESPEFSKSDMRIAENMMTIRDVELAKLSGAHVHMCHVSTKEALKCIIAAKDEGANITLEVTPHHIGLTKEINDYRVNPPIREKEDVEEIIKAIKMGNVDTIGTDHAPHTLEEKSKGSPGMVGLETAFPICYTKLVRENGVSLNELSKLMSLNPARLLGMNKGRISIGVEADLVLIDIDKKIKVDSNEFVSKGRNTPFEGMEYYGEVLATIKSGKIKYKK</sequence>
<keyword id="KW-0378">Hydrolase</keyword>
<keyword id="KW-0479">Metal-binding</keyword>
<keyword id="KW-0665">Pyrimidine biosynthesis</keyword>
<keyword id="KW-0862">Zinc</keyword>
<organism>
    <name type="scientific">Clostridium botulinum (strain Eklund 17B / Type B)</name>
    <dbReference type="NCBI Taxonomy" id="935198"/>
    <lineage>
        <taxon>Bacteria</taxon>
        <taxon>Bacillati</taxon>
        <taxon>Bacillota</taxon>
        <taxon>Clostridia</taxon>
        <taxon>Eubacteriales</taxon>
        <taxon>Clostridiaceae</taxon>
        <taxon>Clostridium</taxon>
    </lineage>
</organism>
<name>PYRC_CLOBB</name>
<dbReference type="EC" id="3.5.2.3" evidence="1"/>
<dbReference type="EMBL" id="CP001056">
    <property type="protein sequence ID" value="ACD22973.1"/>
    <property type="molecule type" value="Genomic_DNA"/>
</dbReference>
<dbReference type="SMR" id="B2TNG1"/>
<dbReference type="KEGG" id="cbk:CLL_A2579"/>
<dbReference type="PATRIC" id="fig|935198.13.peg.2534"/>
<dbReference type="HOGENOM" id="CLU_015572_1_2_9"/>
<dbReference type="UniPathway" id="UPA00070">
    <property type="reaction ID" value="UER00117"/>
</dbReference>
<dbReference type="Proteomes" id="UP000001195">
    <property type="component" value="Chromosome"/>
</dbReference>
<dbReference type="GO" id="GO:0005737">
    <property type="term" value="C:cytoplasm"/>
    <property type="evidence" value="ECO:0007669"/>
    <property type="project" value="TreeGrafter"/>
</dbReference>
<dbReference type="GO" id="GO:0004038">
    <property type="term" value="F:allantoinase activity"/>
    <property type="evidence" value="ECO:0007669"/>
    <property type="project" value="TreeGrafter"/>
</dbReference>
<dbReference type="GO" id="GO:0004151">
    <property type="term" value="F:dihydroorotase activity"/>
    <property type="evidence" value="ECO:0007669"/>
    <property type="project" value="UniProtKB-UniRule"/>
</dbReference>
<dbReference type="GO" id="GO:0008270">
    <property type="term" value="F:zinc ion binding"/>
    <property type="evidence" value="ECO:0007669"/>
    <property type="project" value="UniProtKB-UniRule"/>
</dbReference>
<dbReference type="GO" id="GO:0044205">
    <property type="term" value="P:'de novo' UMP biosynthetic process"/>
    <property type="evidence" value="ECO:0007669"/>
    <property type="project" value="UniProtKB-UniRule"/>
</dbReference>
<dbReference type="GO" id="GO:0006145">
    <property type="term" value="P:purine nucleobase catabolic process"/>
    <property type="evidence" value="ECO:0007669"/>
    <property type="project" value="TreeGrafter"/>
</dbReference>
<dbReference type="CDD" id="cd01317">
    <property type="entry name" value="DHOase_IIa"/>
    <property type="match status" value="1"/>
</dbReference>
<dbReference type="Gene3D" id="3.20.20.140">
    <property type="entry name" value="Metal-dependent hydrolases"/>
    <property type="match status" value="1"/>
</dbReference>
<dbReference type="HAMAP" id="MF_00220_B">
    <property type="entry name" value="PyrC_classI_B"/>
    <property type="match status" value="1"/>
</dbReference>
<dbReference type="InterPro" id="IPR006680">
    <property type="entry name" value="Amidohydro-rel"/>
</dbReference>
<dbReference type="InterPro" id="IPR004722">
    <property type="entry name" value="DHOase"/>
</dbReference>
<dbReference type="InterPro" id="IPR050138">
    <property type="entry name" value="DHOase/Allantoinase_Hydrolase"/>
</dbReference>
<dbReference type="InterPro" id="IPR002195">
    <property type="entry name" value="Dihydroorotase_CS"/>
</dbReference>
<dbReference type="InterPro" id="IPR011059">
    <property type="entry name" value="Metal-dep_hydrolase_composite"/>
</dbReference>
<dbReference type="InterPro" id="IPR032466">
    <property type="entry name" value="Metal_Hydrolase"/>
</dbReference>
<dbReference type="NCBIfam" id="TIGR00857">
    <property type="entry name" value="pyrC_multi"/>
    <property type="match status" value="1"/>
</dbReference>
<dbReference type="PANTHER" id="PTHR43668">
    <property type="entry name" value="ALLANTOINASE"/>
    <property type="match status" value="1"/>
</dbReference>
<dbReference type="PANTHER" id="PTHR43668:SF2">
    <property type="entry name" value="ALLANTOINASE"/>
    <property type="match status" value="1"/>
</dbReference>
<dbReference type="Pfam" id="PF01979">
    <property type="entry name" value="Amidohydro_1"/>
    <property type="match status" value="1"/>
</dbReference>
<dbReference type="SUPFAM" id="SSF51338">
    <property type="entry name" value="Composite domain of metallo-dependent hydrolases"/>
    <property type="match status" value="1"/>
</dbReference>
<dbReference type="SUPFAM" id="SSF51556">
    <property type="entry name" value="Metallo-dependent hydrolases"/>
    <property type="match status" value="1"/>
</dbReference>
<dbReference type="PROSITE" id="PS00483">
    <property type="entry name" value="DIHYDROOROTASE_2"/>
    <property type="match status" value="1"/>
</dbReference>
<accession>B2TNG1</accession>
<feature type="chain" id="PRO_1000100073" description="Dihydroorotase">
    <location>
        <begin position="1"/>
        <end position="398"/>
    </location>
</feature>
<feature type="active site" evidence="1">
    <location>
        <position position="283"/>
    </location>
</feature>
<feature type="binding site" evidence="1">
    <location>
        <position position="58"/>
    </location>
    <ligand>
        <name>Zn(2+)</name>
        <dbReference type="ChEBI" id="CHEBI:29105"/>
        <label>1</label>
    </ligand>
</feature>
<feature type="binding site" evidence="1">
    <location>
        <begin position="60"/>
        <end position="62"/>
    </location>
    <ligand>
        <name>substrate</name>
    </ligand>
</feature>
<feature type="binding site" evidence="1">
    <location>
        <position position="60"/>
    </location>
    <ligand>
        <name>Zn(2+)</name>
        <dbReference type="ChEBI" id="CHEBI:29105"/>
        <label>1</label>
    </ligand>
</feature>
<feature type="binding site" evidence="1">
    <location>
        <position position="92"/>
    </location>
    <ligand>
        <name>substrate</name>
    </ligand>
</feature>
<feature type="binding site" evidence="1">
    <location>
        <position position="151"/>
    </location>
    <ligand>
        <name>Zn(2+)</name>
        <dbReference type="ChEBI" id="CHEBI:29105"/>
        <label>1</label>
    </ligand>
</feature>
<feature type="binding site" evidence="1">
    <location>
        <position position="151"/>
    </location>
    <ligand>
        <name>Zn(2+)</name>
        <dbReference type="ChEBI" id="CHEBI:29105"/>
        <label>2</label>
    </ligand>
</feature>
<feature type="binding site" evidence="1">
    <location>
        <position position="178"/>
    </location>
    <ligand>
        <name>Zn(2+)</name>
        <dbReference type="ChEBI" id="CHEBI:29105"/>
        <label>2</label>
    </ligand>
</feature>
<feature type="binding site" evidence="1">
    <location>
        <position position="215"/>
    </location>
    <ligand>
        <name>Zn(2+)</name>
        <dbReference type="ChEBI" id="CHEBI:29105"/>
        <label>2</label>
    </ligand>
</feature>
<feature type="binding site" evidence="1">
    <location>
        <position position="256"/>
    </location>
    <ligand>
        <name>substrate</name>
    </ligand>
</feature>
<feature type="binding site" evidence="1">
    <location>
        <position position="283"/>
    </location>
    <ligand>
        <name>Zn(2+)</name>
        <dbReference type="ChEBI" id="CHEBI:29105"/>
        <label>1</label>
    </ligand>
</feature>
<feature type="binding site" evidence="1">
    <location>
        <position position="287"/>
    </location>
    <ligand>
        <name>substrate</name>
    </ligand>
</feature>
<feature type="binding site" evidence="1">
    <location>
        <begin position="297"/>
        <end position="298"/>
    </location>
    <ligand>
        <name>substrate</name>
    </ligand>
</feature>
<comment type="function">
    <text evidence="1">Catalyzes the reversible cyclization of carbamoyl aspartate to dihydroorotate.</text>
</comment>
<comment type="catalytic activity">
    <reaction evidence="1">
        <text>(S)-dihydroorotate + H2O = N-carbamoyl-L-aspartate + H(+)</text>
        <dbReference type="Rhea" id="RHEA:24296"/>
        <dbReference type="ChEBI" id="CHEBI:15377"/>
        <dbReference type="ChEBI" id="CHEBI:15378"/>
        <dbReference type="ChEBI" id="CHEBI:30864"/>
        <dbReference type="ChEBI" id="CHEBI:32814"/>
        <dbReference type="EC" id="3.5.2.3"/>
    </reaction>
</comment>
<comment type="cofactor">
    <cofactor evidence="1">
        <name>Zn(2+)</name>
        <dbReference type="ChEBI" id="CHEBI:29105"/>
    </cofactor>
    <text evidence="1">Binds 2 Zn(2+) ions per subunit.</text>
</comment>
<comment type="pathway">
    <text evidence="1">Pyrimidine metabolism; UMP biosynthesis via de novo pathway; (S)-dihydroorotate from bicarbonate: step 3/3.</text>
</comment>
<comment type="similarity">
    <text evidence="1">Belongs to the metallo-dependent hydrolases superfamily. DHOase family. Class I DHOase subfamily.</text>
</comment>
<protein>
    <recommendedName>
        <fullName evidence="1">Dihydroorotase</fullName>
        <shortName evidence="1">DHOase</shortName>
        <ecNumber evidence="1">3.5.2.3</ecNumber>
    </recommendedName>
</protein>